<protein>
    <recommendedName>
        <fullName evidence="4">FAD-dependent monooxygenase adaC</fullName>
        <ecNumber evidence="3">1.-.-.-</ecNumber>
    </recommendedName>
    <alternativeName>
        <fullName evidence="4">2-acetyl-2-decarboxamidoanthrotainin biosynthesis cluster protein C</fullName>
    </alternativeName>
</protein>
<name>ADAC_ASPNC</name>
<reference key="1">
    <citation type="journal article" date="2007" name="Nat. Biotechnol.">
        <title>Genome sequencing and analysis of the versatile cell factory Aspergillus niger CBS 513.88.</title>
        <authorList>
            <person name="Pel H.J."/>
            <person name="de Winde J.H."/>
            <person name="Archer D.B."/>
            <person name="Dyer P.S."/>
            <person name="Hofmann G."/>
            <person name="Schaap P.J."/>
            <person name="Turner G."/>
            <person name="de Vries R.P."/>
            <person name="Albang R."/>
            <person name="Albermann K."/>
            <person name="Andersen M.R."/>
            <person name="Bendtsen J.D."/>
            <person name="Benen J.A.E."/>
            <person name="van den Berg M."/>
            <person name="Breestraat S."/>
            <person name="Caddick M.X."/>
            <person name="Contreras R."/>
            <person name="Cornell M."/>
            <person name="Coutinho P.M."/>
            <person name="Danchin E.G.J."/>
            <person name="Debets A.J.M."/>
            <person name="Dekker P."/>
            <person name="van Dijck P.W.M."/>
            <person name="van Dijk A."/>
            <person name="Dijkhuizen L."/>
            <person name="Driessen A.J.M."/>
            <person name="d'Enfert C."/>
            <person name="Geysens S."/>
            <person name="Goosen C."/>
            <person name="Groot G.S.P."/>
            <person name="de Groot P.W.J."/>
            <person name="Guillemette T."/>
            <person name="Henrissat B."/>
            <person name="Herweijer M."/>
            <person name="van den Hombergh J.P.T.W."/>
            <person name="van den Hondel C.A.M.J.J."/>
            <person name="van der Heijden R.T.J.M."/>
            <person name="van der Kaaij R.M."/>
            <person name="Klis F.M."/>
            <person name="Kools H.J."/>
            <person name="Kubicek C.P."/>
            <person name="van Kuyk P.A."/>
            <person name="Lauber J."/>
            <person name="Lu X."/>
            <person name="van der Maarel M.J.E.C."/>
            <person name="Meulenberg R."/>
            <person name="Menke H."/>
            <person name="Mortimer M.A."/>
            <person name="Nielsen J."/>
            <person name="Oliver S.G."/>
            <person name="Olsthoorn M."/>
            <person name="Pal K."/>
            <person name="van Peij N.N.M.E."/>
            <person name="Ram A.F.J."/>
            <person name="Rinas U."/>
            <person name="Roubos J.A."/>
            <person name="Sagt C.M.J."/>
            <person name="Schmoll M."/>
            <person name="Sun J."/>
            <person name="Ussery D."/>
            <person name="Varga J."/>
            <person name="Vervecken W."/>
            <person name="van de Vondervoort P.J.J."/>
            <person name="Wedler H."/>
            <person name="Woesten H.A.B."/>
            <person name="Zeng A.-P."/>
            <person name="van Ooyen A.J.J."/>
            <person name="Visser J."/>
            <person name="Stam H."/>
        </authorList>
    </citation>
    <scope>NUCLEOTIDE SEQUENCE [LARGE SCALE GENOMIC DNA]</scope>
    <source>
        <strain>ATCC MYA-4892 / CBS 513.88 / FGSC A1513</strain>
    </source>
</reference>
<reference key="2">
    <citation type="journal article" date="2011" name="J. Am. Chem. Soc.">
        <title>Comparative characterization of fungal anthracenone and naphthacenedione biosynthetic pathways reveals an alpha-hydroxylation-dependent Claisen-like cyclization catalyzed by a dimanganese thioesterase.</title>
        <authorList>
            <person name="Li Y."/>
            <person name="Chooi Y.H."/>
            <person name="Sheng Y."/>
            <person name="Valentine J.S."/>
            <person name="Tang Y."/>
        </authorList>
    </citation>
    <scope>IDENTIFICATION</scope>
    <scope>FUNCTION</scope>
    <scope>CATALYTIC ACTIVITY</scope>
    <scope>PATHWAY</scope>
</reference>
<comment type="function">
    <text evidence="3">FAD-dependent monooxygenase; part of the gene cluster that mediates the biosynthesis of the linear tetracyclic TAN-1612 neuropeptide Y receptor antagonist (PubMed:21866960). The decaketide backbone of TAN-1612 is synthesized by the non-reducing polyketide synthase adaA via condensation of one acetyl-CoA starter unit with 9 malonyl-CoA units. The FAD-dependent monooxygenase adaC then performs hydroxylation at C2 while the polaketide chain is still attached to the NRPKS adaA (PubMed:21866960). The alpha-hydroxylation step at C2 appears to be crucial for the following C18-C1 Claisen cyclization and release of the C9-hydroxyl version of TAN-1612 from the NRPKS adaA, two steps performed by the lactamase-like protein adaB (PubMed:21866960). Finally, the O-methyltransferase adaD performs the C9 O-methylation to complete the biosynthesis of TAN-1612 (PubMed:21866960).</text>
</comment>
<comment type="catalytic activity">
    <reaction evidence="3">
        <text>3-(2,4-dioxopentyl)-3,6,8,9-tetrahydroxy-1-oxo-1,2,3,4-tetrahydroanthracene-2-carboxyl-[ACP] + NADPH + O2 + H(+) = 3-(2,4-dioxopentyl)-2,3,6,8,9-pentahydroxy-1-oxo-1,2,3,4-tetrahydroanthracene-2-carboxyl-[ACP] + NADP(+) + H2O</text>
        <dbReference type="Rhea" id="RHEA:64092"/>
        <dbReference type="Rhea" id="RHEA-COMP:16518"/>
        <dbReference type="Rhea" id="RHEA-COMP:16520"/>
        <dbReference type="ChEBI" id="CHEBI:15377"/>
        <dbReference type="ChEBI" id="CHEBI:15378"/>
        <dbReference type="ChEBI" id="CHEBI:15379"/>
        <dbReference type="ChEBI" id="CHEBI:57783"/>
        <dbReference type="ChEBI" id="CHEBI:58349"/>
        <dbReference type="ChEBI" id="CHEBI:149687"/>
        <dbReference type="ChEBI" id="CHEBI:149688"/>
    </reaction>
    <physiologicalReaction direction="left-to-right" evidence="3">
        <dbReference type="Rhea" id="RHEA:64093"/>
    </physiologicalReaction>
</comment>
<comment type="cofactor">
    <cofactor evidence="1">
        <name>FAD</name>
        <dbReference type="ChEBI" id="CHEBI:57692"/>
    </cofactor>
</comment>
<comment type="pathway">
    <text evidence="3">Secondary metabolite biosynthesis.</text>
</comment>
<comment type="similarity">
    <text evidence="5">Belongs to the paxM FAD-dependent monooxygenase family.</text>
</comment>
<proteinExistence type="evidence at protein level"/>
<sequence>MTPPILIIGAGLSGLTVSRILTNASIPNIVFEASTPDRSQGYAISLRDWGYTSLLTALGDLPLRSLTRGVAPDRILGGTGWIDQALRDNHTGNLLVAPDPEAKQCIVRANRNALRTWIADSGDEEVDIRYGHRLRSVQGSMGNVTATFENGAKYQGSLVIAADGVHSSVRSQILPHVSPDIVPVVVYHGELELPRKEFDNLIRPHSGPSNILAGVGDGFNTPITVCNITPTHVHLDWSYSRPSTENKENKDPLYRPHVSAAEAKQIPPALLEEIASRDLARPWSQLLNAEALPTHRVFNWVSRCVSVTREDVNAAQKQGVVFIGDSWHAMPIFGGEGGNHALVDAVELAEALTGKEGNLDAAVTGYYDRAWRRCQEAVRRSRQRFFQLHRPMREWMEIAEKKKMMAAMKGVEAH</sequence>
<organism>
    <name type="scientific">Aspergillus niger (strain ATCC MYA-4892 / CBS 513.88 / FGSC A1513)</name>
    <dbReference type="NCBI Taxonomy" id="425011"/>
    <lineage>
        <taxon>Eukaryota</taxon>
        <taxon>Fungi</taxon>
        <taxon>Dikarya</taxon>
        <taxon>Ascomycota</taxon>
        <taxon>Pezizomycotina</taxon>
        <taxon>Eurotiomycetes</taxon>
        <taxon>Eurotiomycetidae</taxon>
        <taxon>Eurotiales</taxon>
        <taxon>Aspergillaceae</taxon>
        <taxon>Aspergillus</taxon>
        <taxon>Aspergillus subgen. Circumdati</taxon>
    </lineage>
</organism>
<feature type="chain" id="PRO_0000446346" description="FAD-dependent monooxygenase adaC">
    <location>
        <begin position="1"/>
        <end position="414"/>
    </location>
</feature>
<feature type="binding site" evidence="2">
    <location>
        <position position="32"/>
    </location>
    <ligand>
        <name>FAD</name>
        <dbReference type="ChEBI" id="CHEBI:57692"/>
    </ligand>
</feature>
<feature type="binding site" evidence="2">
    <location>
        <position position="43"/>
    </location>
    <ligand>
        <name>FAD</name>
        <dbReference type="ChEBI" id="CHEBI:57692"/>
    </ligand>
</feature>
<feature type="binding site" evidence="2">
    <location>
        <position position="115"/>
    </location>
    <ligand>
        <name>FAD</name>
        <dbReference type="ChEBI" id="CHEBI:57692"/>
    </ligand>
</feature>
<feature type="binding site" evidence="2">
    <location>
        <position position="325"/>
    </location>
    <ligand>
        <name>FAD</name>
        <dbReference type="ChEBI" id="CHEBI:57692"/>
    </ligand>
</feature>
<feature type="binding site" evidence="2">
    <location>
        <position position="338"/>
    </location>
    <ligand>
        <name>FAD</name>
        <dbReference type="ChEBI" id="CHEBI:57692"/>
    </ligand>
</feature>
<evidence type="ECO:0000250" key="1">
    <source>
        <dbReference type="UniProtKB" id="A6T923"/>
    </source>
</evidence>
<evidence type="ECO:0000250" key="2">
    <source>
        <dbReference type="UniProtKB" id="B8M9J8"/>
    </source>
</evidence>
<evidence type="ECO:0000269" key="3">
    <source>
    </source>
</evidence>
<evidence type="ECO:0000303" key="4">
    <source>
    </source>
</evidence>
<evidence type="ECO:0000305" key="5"/>
<accession>A2QX24</accession>
<keyword id="KW-0274">FAD</keyword>
<keyword id="KW-0285">Flavoprotein</keyword>
<keyword id="KW-0503">Monooxygenase</keyword>
<keyword id="KW-0560">Oxidoreductase</keyword>
<keyword id="KW-1185">Reference proteome</keyword>
<gene>
    <name evidence="4" type="primary">adaC</name>
    <name type="ORF">An11g07330</name>
</gene>
<dbReference type="EC" id="1.-.-.-" evidence="3"/>
<dbReference type="EMBL" id="AM270243">
    <property type="protein sequence ID" value="CAK40780.1"/>
    <property type="molecule type" value="Genomic_DNA"/>
</dbReference>
<dbReference type="RefSeq" id="XP_001394707.1">
    <property type="nucleotide sequence ID" value="XM_001394670.2"/>
</dbReference>
<dbReference type="SMR" id="A2QX24"/>
<dbReference type="EnsemblFungi" id="CAK40780">
    <property type="protein sequence ID" value="CAK40780"/>
    <property type="gene ID" value="An11g07330"/>
</dbReference>
<dbReference type="GeneID" id="4984953"/>
<dbReference type="KEGG" id="ang:An11g07330"/>
<dbReference type="VEuPathDB" id="FungiDB:An11g07330"/>
<dbReference type="HOGENOM" id="CLU_040697_0_0_1"/>
<dbReference type="Proteomes" id="UP000006706">
    <property type="component" value="Chromosome 7R"/>
</dbReference>
<dbReference type="GO" id="GO:0071949">
    <property type="term" value="F:FAD binding"/>
    <property type="evidence" value="ECO:0007669"/>
    <property type="project" value="InterPro"/>
</dbReference>
<dbReference type="GO" id="GO:0004497">
    <property type="term" value="F:monooxygenase activity"/>
    <property type="evidence" value="ECO:0007669"/>
    <property type="project" value="UniProtKB-KW"/>
</dbReference>
<dbReference type="Gene3D" id="3.50.50.60">
    <property type="entry name" value="FAD/NAD(P)-binding domain"/>
    <property type="match status" value="1"/>
</dbReference>
<dbReference type="InterPro" id="IPR002938">
    <property type="entry name" value="FAD-bd"/>
</dbReference>
<dbReference type="InterPro" id="IPR036188">
    <property type="entry name" value="FAD/NAD-bd_sf"/>
</dbReference>
<dbReference type="PANTHER" id="PTHR47178:SF4">
    <property type="entry name" value="FAD-DEPENDENT MONOOXYGENASE APTC"/>
    <property type="match status" value="1"/>
</dbReference>
<dbReference type="PANTHER" id="PTHR47178">
    <property type="entry name" value="MONOOXYGENASE, FAD-BINDING"/>
    <property type="match status" value="1"/>
</dbReference>
<dbReference type="Pfam" id="PF01494">
    <property type="entry name" value="FAD_binding_3"/>
    <property type="match status" value="2"/>
</dbReference>
<dbReference type="PRINTS" id="PR00420">
    <property type="entry name" value="RNGMNOXGNASE"/>
</dbReference>
<dbReference type="SUPFAM" id="SSF51905">
    <property type="entry name" value="FAD/NAD(P)-binding domain"/>
    <property type="match status" value="1"/>
</dbReference>